<gene>
    <name evidence="1" type="primary">purA</name>
    <name type="ordered locus">lin0048</name>
</gene>
<sequence length="430" mass="47676">MSSVVVVGTQWGDEGKGKITDFLSENAEAIARYQGGNNAGHTIKFDGVTYKLHLIPSGIFYKEKISVIGNGMVVDPKALVEELKYLHDKGVDTSNLRISNRAHIILPYHIRIDEADEERKGANKIGTTKKGIGPAYMDKAARVGIRIIDLLDKETFKEKLEHNLGEKNRLLERFYELEGFKLEDILDEYYEYGQQFKDYVCDTSVVLNDALDDGKRVLFEGAQGVMLDIDQGTYPFVTSSNPIAGGVTIGSGVGPSKINHVVGVAKAYTTRVGDGPFPTELFDSIGDTIREVGHEYGTTTGRPRRVGWFDSVVVRHARRVSGLTDLSLTLLDVLTGIETLKICVAYKLDGKTITEFPASLKDLARCEPVYEELPGWTEDITEVQSLDDLPVNCRHYMERIAQLTGVQVSMFSVGPDRAQTHVVKSVWRLA</sequence>
<keyword id="KW-0963">Cytoplasm</keyword>
<keyword id="KW-0342">GTP-binding</keyword>
<keyword id="KW-0436">Ligase</keyword>
<keyword id="KW-0460">Magnesium</keyword>
<keyword id="KW-0479">Metal-binding</keyword>
<keyword id="KW-0547">Nucleotide-binding</keyword>
<keyword id="KW-0658">Purine biosynthesis</keyword>
<proteinExistence type="inferred from homology"/>
<dbReference type="EC" id="6.3.4.4" evidence="1"/>
<dbReference type="EMBL" id="AL596163">
    <property type="protein sequence ID" value="CAC95281.1"/>
    <property type="molecule type" value="Genomic_DNA"/>
</dbReference>
<dbReference type="PIR" id="AI1438">
    <property type="entry name" value="AI1438"/>
</dbReference>
<dbReference type="RefSeq" id="WP_003772678.1">
    <property type="nucleotide sequence ID" value="NC_003212.1"/>
</dbReference>
<dbReference type="SMR" id="Q92FQ5"/>
<dbReference type="STRING" id="272626.gene:17564359"/>
<dbReference type="GeneID" id="93233541"/>
<dbReference type="KEGG" id="lin:purA"/>
<dbReference type="eggNOG" id="COG0104">
    <property type="taxonomic scope" value="Bacteria"/>
</dbReference>
<dbReference type="HOGENOM" id="CLU_029848_0_0_9"/>
<dbReference type="OrthoDB" id="9807553at2"/>
<dbReference type="UniPathway" id="UPA00075">
    <property type="reaction ID" value="UER00335"/>
</dbReference>
<dbReference type="Proteomes" id="UP000002513">
    <property type="component" value="Chromosome"/>
</dbReference>
<dbReference type="GO" id="GO:0005737">
    <property type="term" value="C:cytoplasm"/>
    <property type="evidence" value="ECO:0007669"/>
    <property type="project" value="UniProtKB-SubCell"/>
</dbReference>
<dbReference type="GO" id="GO:0004019">
    <property type="term" value="F:adenylosuccinate synthase activity"/>
    <property type="evidence" value="ECO:0007669"/>
    <property type="project" value="UniProtKB-UniRule"/>
</dbReference>
<dbReference type="GO" id="GO:0005525">
    <property type="term" value="F:GTP binding"/>
    <property type="evidence" value="ECO:0007669"/>
    <property type="project" value="UniProtKB-UniRule"/>
</dbReference>
<dbReference type="GO" id="GO:0000287">
    <property type="term" value="F:magnesium ion binding"/>
    <property type="evidence" value="ECO:0007669"/>
    <property type="project" value="UniProtKB-UniRule"/>
</dbReference>
<dbReference type="GO" id="GO:0044208">
    <property type="term" value="P:'de novo' AMP biosynthetic process"/>
    <property type="evidence" value="ECO:0007669"/>
    <property type="project" value="UniProtKB-UniRule"/>
</dbReference>
<dbReference type="GO" id="GO:0046040">
    <property type="term" value="P:IMP metabolic process"/>
    <property type="evidence" value="ECO:0007669"/>
    <property type="project" value="TreeGrafter"/>
</dbReference>
<dbReference type="CDD" id="cd03108">
    <property type="entry name" value="AdSS"/>
    <property type="match status" value="1"/>
</dbReference>
<dbReference type="FunFam" id="1.10.300.10:FF:000001">
    <property type="entry name" value="Adenylosuccinate synthetase"/>
    <property type="match status" value="1"/>
</dbReference>
<dbReference type="FunFam" id="3.90.170.10:FF:000001">
    <property type="entry name" value="Adenylosuccinate synthetase"/>
    <property type="match status" value="1"/>
</dbReference>
<dbReference type="Gene3D" id="3.40.440.10">
    <property type="entry name" value="Adenylosuccinate Synthetase, subunit A, domain 1"/>
    <property type="match status" value="1"/>
</dbReference>
<dbReference type="Gene3D" id="1.10.300.10">
    <property type="entry name" value="Adenylosuccinate Synthetase, subunit A, domain 2"/>
    <property type="match status" value="1"/>
</dbReference>
<dbReference type="Gene3D" id="3.90.170.10">
    <property type="entry name" value="Adenylosuccinate Synthetase, subunit A, domain 3"/>
    <property type="match status" value="1"/>
</dbReference>
<dbReference type="HAMAP" id="MF_00011">
    <property type="entry name" value="Adenylosucc_synth"/>
    <property type="match status" value="1"/>
</dbReference>
<dbReference type="InterPro" id="IPR018220">
    <property type="entry name" value="Adenylosuccin_syn_GTP-bd"/>
</dbReference>
<dbReference type="InterPro" id="IPR033128">
    <property type="entry name" value="Adenylosuccin_syn_Lys_AS"/>
</dbReference>
<dbReference type="InterPro" id="IPR042109">
    <property type="entry name" value="Adenylosuccinate_synth_dom1"/>
</dbReference>
<dbReference type="InterPro" id="IPR042110">
    <property type="entry name" value="Adenylosuccinate_synth_dom2"/>
</dbReference>
<dbReference type="InterPro" id="IPR042111">
    <property type="entry name" value="Adenylosuccinate_synth_dom3"/>
</dbReference>
<dbReference type="InterPro" id="IPR001114">
    <property type="entry name" value="Adenylosuccinate_synthetase"/>
</dbReference>
<dbReference type="InterPro" id="IPR027417">
    <property type="entry name" value="P-loop_NTPase"/>
</dbReference>
<dbReference type="NCBIfam" id="NF002223">
    <property type="entry name" value="PRK01117.1"/>
    <property type="match status" value="1"/>
</dbReference>
<dbReference type="NCBIfam" id="TIGR00184">
    <property type="entry name" value="purA"/>
    <property type="match status" value="1"/>
</dbReference>
<dbReference type="PANTHER" id="PTHR11846">
    <property type="entry name" value="ADENYLOSUCCINATE SYNTHETASE"/>
    <property type="match status" value="1"/>
</dbReference>
<dbReference type="PANTHER" id="PTHR11846:SF0">
    <property type="entry name" value="ADENYLOSUCCINATE SYNTHETASE"/>
    <property type="match status" value="1"/>
</dbReference>
<dbReference type="Pfam" id="PF00709">
    <property type="entry name" value="Adenylsucc_synt"/>
    <property type="match status" value="1"/>
</dbReference>
<dbReference type="SMART" id="SM00788">
    <property type="entry name" value="Adenylsucc_synt"/>
    <property type="match status" value="1"/>
</dbReference>
<dbReference type="SUPFAM" id="SSF52540">
    <property type="entry name" value="P-loop containing nucleoside triphosphate hydrolases"/>
    <property type="match status" value="1"/>
</dbReference>
<dbReference type="PROSITE" id="PS01266">
    <property type="entry name" value="ADENYLOSUCCIN_SYN_1"/>
    <property type="match status" value="1"/>
</dbReference>
<dbReference type="PROSITE" id="PS00513">
    <property type="entry name" value="ADENYLOSUCCIN_SYN_2"/>
    <property type="match status" value="1"/>
</dbReference>
<comment type="function">
    <text evidence="1">Plays an important role in the de novo pathway of purine nucleotide biosynthesis. Catalyzes the first committed step in the biosynthesis of AMP from IMP.</text>
</comment>
<comment type="catalytic activity">
    <reaction evidence="1">
        <text>IMP + L-aspartate + GTP = N(6)-(1,2-dicarboxyethyl)-AMP + GDP + phosphate + 2 H(+)</text>
        <dbReference type="Rhea" id="RHEA:15753"/>
        <dbReference type="ChEBI" id="CHEBI:15378"/>
        <dbReference type="ChEBI" id="CHEBI:29991"/>
        <dbReference type="ChEBI" id="CHEBI:37565"/>
        <dbReference type="ChEBI" id="CHEBI:43474"/>
        <dbReference type="ChEBI" id="CHEBI:57567"/>
        <dbReference type="ChEBI" id="CHEBI:58053"/>
        <dbReference type="ChEBI" id="CHEBI:58189"/>
        <dbReference type="EC" id="6.3.4.4"/>
    </reaction>
</comment>
<comment type="cofactor">
    <cofactor evidence="1">
        <name>Mg(2+)</name>
        <dbReference type="ChEBI" id="CHEBI:18420"/>
    </cofactor>
    <text evidence="1">Binds 1 Mg(2+) ion per subunit.</text>
</comment>
<comment type="pathway">
    <text evidence="1">Purine metabolism; AMP biosynthesis via de novo pathway; AMP from IMP: step 1/2.</text>
</comment>
<comment type="subunit">
    <text evidence="1">Homodimer.</text>
</comment>
<comment type="subcellular location">
    <subcellularLocation>
        <location evidence="1">Cytoplasm</location>
    </subcellularLocation>
</comment>
<comment type="similarity">
    <text evidence="1">Belongs to the adenylosuccinate synthetase family.</text>
</comment>
<feature type="chain" id="PRO_0000095194" description="Adenylosuccinate synthetase">
    <location>
        <begin position="1"/>
        <end position="430"/>
    </location>
</feature>
<feature type="active site" description="Proton acceptor" evidence="1">
    <location>
        <position position="13"/>
    </location>
</feature>
<feature type="active site" description="Proton donor" evidence="1">
    <location>
        <position position="41"/>
    </location>
</feature>
<feature type="binding site" evidence="1">
    <location>
        <begin position="12"/>
        <end position="18"/>
    </location>
    <ligand>
        <name>GTP</name>
        <dbReference type="ChEBI" id="CHEBI:37565"/>
    </ligand>
</feature>
<feature type="binding site" description="in other chain" evidence="1">
    <location>
        <begin position="13"/>
        <end position="16"/>
    </location>
    <ligand>
        <name>IMP</name>
        <dbReference type="ChEBI" id="CHEBI:58053"/>
        <note>ligand shared between dimeric partners</note>
    </ligand>
</feature>
<feature type="binding site" evidence="1">
    <location>
        <position position="13"/>
    </location>
    <ligand>
        <name>Mg(2+)</name>
        <dbReference type="ChEBI" id="CHEBI:18420"/>
    </ligand>
</feature>
<feature type="binding site" description="in other chain" evidence="1">
    <location>
        <begin position="38"/>
        <end position="41"/>
    </location>
    <ligand>
        <name>IMP</name>
        <dbReference type="ChEBI" id="CHEBI:58053"/>
        <note>ligand shared between dimeric partners</note>
    </ligand>
</feature>
<feature type="binding site" evidence="1">
    <location>
        <begin position="40"/>
        <end position="42"/>
    </location>
    <ligand>
        <name>GTP</name>
        <dbReference type="ChEBI" id="CHEBI:37565"/>
    </ligand>
</feature>
<feature type="binding site" evidence="1">
    <location>
        <position position="40"/>
    </location>
    <ligand>
        <name>Mg(2+)</name>
        <dbReference type="ChEBI" id="CHEBI:18420"/>
    </ligand>
</feature>
<feature type="binding site" description="in other chain" evidence="1">
    <location>
        <position position="128"/>
    </location>
    <ligand>
        <name>IMP</name>
        <dbReference type="ChEBI" id="CHEBI:58053"/>
        <note>ligand shared between dimeric partners</note>
    </ligand>
</feature>
<feature type="binding site" evidence="1">
    <location>
        <position position="142"/>
    </location>
    <ligand>
        <name>IMP</name>
        <dbReference type="ChEBI" id="CHEBI:58053"/>
        <note>ligand shared between dimeric partners</note>
    </ligand>
</feature>
<feature type="binding site" description="in other chain" evidence="1">
    <location>
        <position position="223"/>
    </location>
    <ligand>
        <name>IMP</name>
        <dbReference type="ChEBI" id="CHEBI:58053"/>
        <note>ligand shared between dimeric partners</note>
    </ligand>
</feature>
<feature type="binding site" description="in other chain" evidence="1">
    <location>
        <position position="238"/>
    </location>
    <ligand>
        <name>IMP</name>
        <dbReference type="ChEBI" id="CHEBI:58053"/>
        <note>ligand shared between dimeric partners</note>
    </ligand>
</feature>
<feature type="binding site" evidence="1">
    <location>
        <begin position="298"/>
        <end position="304"/>
    </location>
    <ligand>
        <name>substrate</name>
    </ligand>
</feature>
<feature type="binding site" description="in other chain" evidence="1">
    <location>
        <position position="302"/>
    </location>
    <ligand>
        <name>IMP</name>
        <dbReference type="ChEBI" id="CHEBI:58053"/>
        <note>ligand shared between dimeric partners</note>
    </ligand>
</feature>
<feature type="binding site" evidence="1">
    <location>
        <position position="304"/>
    </location>
    <ligand>
        <name>GTP</name>
        <dbReference type="ChEBI" id="CHEBI:37565"/>
    </ligand>
</feature>
<feature type="binding site" evidence="1">
    <location>
        <begin position="330"/>
        <end position="332"/>
    </location>
    <ligand>
        <name>GTP</name>
        <dbReference type="ChEBI" id="CHEBI:37565"/>
    </ligand>
</feature>
<feature type="binding site" evidence="1">
    <location>
        <begin position="412"/>
        <end position="414"/>
    </location>
    <ligand>
        <name>GTP</name>
        <dbReference type="ChEBI" id="CHEBI:37565"/>
    </ligand>
</feature>
<reference key="1">
    <citation type="journal article" date="2001" name="Science">
        <title>Comparative genomics of Listeria species.</title>
        <authorList>
            <person name="Glaser P."/>
            <person name="Frangeul L."/>
            <person name="Buchrieser C."/>
            <person name="Rusniok C."/>
            <person name="Amend A."/>
            <person name="Baquero F."/>
            <person name="Berche P."/>
            <person name="Bloecker H."/>
            <person name="Brandt P."/>
            <person name="Chakraborty T."/>
            <person name="Charbit A."/>
            <person name="Chetouani F."/>
            <person name="Couve E."/>
            <person name="de Daruvar A."/>
            <person name="Dehoux P."/>
            <person name="Domann E."/>
            <person name="Dominguez-Bernal G."/>
            <person name="Duchaud E."/>
            <person name="Durant L."/>
            <person name="Dussurget O."/>
            <person name="Entian K.-D."/>
            <person name="Fsihi H."/>
            <person name="Garcia-del Portillo F."/>
            <person name="Garrido P."/>
            <person name="Gautier L."/>
            <person name="Goebel W."/>
            <person name="Gomez-Lopez N."/>
            <person name="Hain T."/>
            <person name="Hauf J."/>
            <person name="Jackson D."/>
            <person name="Jones L.-M."/>
            <person name="Kaerst U."/>
            <person name="Kreft J."/>
            <person name="Kuhn M."/>
            <person name="Kunst F."/>
            <person name="Kurapkat G."/>
            <person name="Madueno E."/>
            <person name="Maitournam A."/>
            <person name="Mata Vicente J."/>
            <person name="Ng E."/>
            <person name="Nedjari H."/>
            <person name="Nordsiek G."/>
            <person name="Novella S."/>
            <person name="de Pablos B."/>
            <person name="Perez-Diaz J.-C."/>
            <person name="Purcell R."/>
            <person name="Remmel B."/>
            <person name="Rose M."/>
            <person name="Schlueter T."/>
            <person name="Simoes N."/>
            <person name="Tierrez A."/>
            <person name="Vazquez-Boland J.-A."/>
            <person name="Voss H."/>
            <person name="Wehland J."/>
            <person name="Cossart P."/>
        </authorList>
    </citation>
    <scope>NUCLEOTIDE SEQUENCE [LARGE SCALE GENOMIC DNA]</scope>
    <source>
        <strain>ATCC BAA-680 / CLIP 11262</strain>
    </source>
</reference>
<accession>Q92FQ5</accession>
<name>PURA_LISIN</name>
<organism>
    <name type="scientific">Listeria innocua serovar 6a (strain ATCC BAA-680 / CLIP 11262)</name>
    <dbReference type="NCBI Taxonomy" id="272626"/>
    <lineage>
        <taxon>Bacteria</taxon>
        <taxon>Bacillati</taxon>
        <taxon>Bacillota</taxon>
        <taxon>Bacilli</taxon>
        <taxon>Bacillales</taxon>
        <taxon>Listeriaceae</taxon>
        <taxon>Listeria</taxon>
    </lineage>
</organism>
<evidence type="ECO:0000255" key="1">
    <source>
        <dbReference type="HAMAP-Rule" id="MF_00011"/>
    </source>
</evidence>
<protein>
    <recommendedName>
        <fullName evidence="1">Adenylosuccinate synthetase</fullName>
        <shortName evidence="1">AMPSase</shortName>
        <shortName evidence="1">AdSS</shortName>
        <ecNumber evidence="1">6.3.4.4</ecNumber>
    </recommendedName>
    <alternativeName>
        <fullName evidence="1">IMP--aspartate ligase</fullName>
    </alternativeName>
</protein>